<sequence length="390" mass="43562">MLSRKGIIPEEYVLTRLAEDPAEPRYRTRERRARFVSKKGNCNVAHKNIREQGRFLQDVFTTLVDLKWPHTLLIFTMSFLCSWLLFAMVWWLIAFAHGDLAPGEGTNVPCVTSIHSFSSAFLFSIEVQVTIGFGGRMVTEECPLAILILIVQNIVGLMINAIMLGCIFMKTAQAHRRAETLIFSKHAVITLRHGRLCFMLRVGDLRKSMIISATIHMQVVRKTTSPEGEVVPLHQVDIPMENGVGGNGIFLVAPLIIYHVIDSNSPLYDLAPSDLHHHQDLEIIVILEGVVETTGITTQARTSYLADEILWGQRFVPIVAEEDGRYSVDYSKFGNTIKVPTPLCTARQLDEDRSLLDALTLASSRGPLRKRSVAVAKAKPKFSISPDSLS</sequence>
<feature type="chain" id="PRO_0000154958" description="ATP-sensitive inward rectifier potassium channel 11">
    <location>
        <begin position="1"/>
        <end position="390"/>
    </location>
</feature>
<feature type="topological domain" description="Cytoplasmic" evidence="5">
    <location>
        <begin position="1"/>
        <end position="65"/>
    </location>
</feature>
<feature type="transmembrane region" description="Helical; Name=M1" evidence="3">
    <location>
        <begin position="66"/>
        <end position="92"/>
    </location>
</feature>
<feature type="topological domain" description="Extracellular" evidence="5">
    <location>
        <begin position="93"/>
        <end position="116"/>
    </location>
</feature>
<feature type="intramembrane region" description="Discontinuously helical; Pore-forming" evidence="3">
    <location>
        <begin position="117"/>
        <end position="133"/>
    </location>
</feature>
<feature type="topological domain" description="Extracellular" evidence="5">
    <location>
        <begin position="134"/>
        <end position="142"/>
    </location>
</feature>
<feature type="transmembrane region" description="Helical; Name=M2" evidence="3">
    <location>
        <begin position="143"/>
        <end position="171"/>
    </location>
</feature>
<feature type="topological domain" description="Cytoplasmic" evidence="5">
    <location>
        <begin position="172"/>
        <end position="390"/>
    </location>
</feature>
<feature type="short sequence motif" description="Selectivity filter" evidence="5">
    <location>
        <begin position="130"/>
        <end position="135"/>
    </location>
</feature>
<feature type="binding site" evidence="3">
    <location>
        <position position="48"/>
    </location>
    <ligand>
        <name>ATP</name>
        <dbReference type="ChEBI" id="CHEBI:30616"/>
        <note>inhibitor</note>
    </ligand>
</feature>
<feature type="binding site" evidence="3">
    <location>
        <position position="50"/>
    </location>
    <ligand>
        <name>ATP</name>
        <dbReference type="ChEBI" id="CHEBI:30616"/>
        <note>inhibitor</note>
    </ligand>
</feature>
<feature type="binding site" evidence="3">
    <location>
        <position position="130"/>
    </location>
    <ligand>
        <name>K(+)</name>
        <dbReference type="ChEBI" id="CHEBI:29103"/>
        <label>1</label>
        <note>ligand shared between the four subunits of the homotetramer</note>
    </ligand>
</feature>
<feature type="binding site" evidence="3">
    <location>
        <position position="133"/>
    </location>
    <ligand>
        <name>K(+)</name>
        <dbReference type="ChEBI" id="CHEBI:29103"/>
        <label>2</label>
        <note>ligand shared between the four subunits of the homotetramer</note>
    </ligand>
</feature>
<feature type="binding site" evidence="2">
    <location>
        <position position="176"/>
    </location>
    <ligand>
        <name>a 1,2-diacyl-sn-glycero-3-phospho-(1D-myo-inositol-4,5-bisphosphate)</name>
        <dbReference type="ChEBI" id="CHEBI:58456"/>
    </ligand>
</feature>
<feature type="binding site" evidence="3">
    <location>
        <position position="330"/>
    </location>
    <ligand>
        <name>ATP</name>
        <dbReference type="ChEBI" id="CHEBI:30616"/>
        <note>inhibitor</note>
    </ligand>
</feature>
<feature type="site" description="Role in the control of polyamine-mediated channel gating and in the blocking by intracellular magnesium" evidence="1">
    <location>
        <position position="160"/>
    </location>
</feature>
<feature type="modified residue" description="Phosphothreonine; by MAPK1" evidence="3">
    <location>
        <position position="341"/>
    </location>
</feature>
<feature type="modified residue" description="Phosphoserine; by MAPK1" evidence="3">
    <location>
        <position position="385"/>
    </location>
</feature>
<feature type="disulfide bond" evidence="3">
    <location>
        <begin position="110"/>
        <end position="142"/>
    </location>
</feature>
<feature type="sequence conflict" description="In Ref. 3; AAD02096." evidence="5" ref="3">
    <original>G</original>
    <variation>S</variation>
    <location>
        <position position="248"/>
    </location>
</feature>
<feature type="strand" evidence="8">
    <location>
        <begin position="38"/>
        <end position="40"/>
    </location>
</feature>
<feature type="strand" evidence="7">
    <location>
        <begin position="44"/>
        <end position="47"/>
    </location>
</feature>
<feature type="helix" evidence="7">
    <location>
        <begin position="53"/>
        <end position="57"/>
    </location>
</feature>
<feature type="helix" evidence="7">
    <location>
        <begin position="59"/>
        <end position="64"/>
    </location>
</feature>
<feature type="helix" evidence="7">
    <location>
        <begin position="68"/>
        <end position="96"/>
    </location>
</feature>
<feature type="turn" evidence="7">
    <location>
        <begin position="97"/>
        <end position="100"/>
    </location>
</feature>
<feature type="helix" evidence="7">
    <location>
        <begin position="117"/>
        <end position="128"/>
    </location>
</feature>
<feature type="strand" evidence="7">
    <location>
        <begin position="134"/>
        <end position="136"/>
    </location>
</feature>
<feature type="helix" evidence="7">
    <location>
        <begin position="143"/>
        <end position="171"/>
    </location>
</feature>
<feature type="turn" evidence="7">
    <location>
        <begin position="174"/>
        <end position="176"/>
    </location>
</feature>
<feature type="helix" evidence="7">
    <location>
        <begin position="177"/>
        <end position="180"/>
    </location>
</feature>
<feature type="strand" evidence="7">
    <location>
        <begin position="181"/>
        <end position="183"/>
    </location>
</feature>
<feature type="strand" evidence="7">
    <location>
        <begin position="185"/>
        <end position="189"/>
    </location>
</feature>
<feature type="strand" evidence="8">
    <location>
        <begin position="192"/>
        <end position="195"/>
    </location>
</feature>
<feature type="strand" evidence="7">
    <location>
        <begin position="197"/>
        <end position="199"/>
    </location>
</feature>
<feature type="strand" evidence="7">
    <location>
        <begin position="202"/>
        <end position="204"/>
    </location>
</feature>
<feature type="strand" evidence="8">
    <location>
        <begin position="206"/>
        <end position="208"/>
    </location>
</feature>
<feature type="strand" evidence="7">
    <location>
        <begin position="210"/>
        <end position="221"/>
    </location>
</feature>
<feature type="strand" evidence="7">
    <location>
        <begin position="226"/>
        <end position="228"/>
    </location>
</feature>
<feature type="strand" evidence="7">
    <location>
        <begin position="234"/>
        <end position="238"/>
    </location>
</feature>
<feature type="strand" evidence="7">
    <location>
        <begin position="243"/>
        <end position="246"/>
    </location>
</feature>
<feature type="strand" evidence="7">
    <location>
        <begin position="258"/>
        <end position="260"/>
    </location>
</feature>
<feature type="strand" evidence="6">
    <location>
        <begin position="262"/>
        <end position="265"/>
    </location>
</feature>
<feature type="helix" evidence="7">
    <location>
        <begin position="266"/>
        <end position="269"/>
    </location>
</feature>
<feature type="strand" evidence="7">
    <location>
        <begin position="276"/>
        <end position="278"/>
    </location>
</feature>
<feature type="strand" evidence="7">
    <location>
        <begin position="282"/>
        <end position="291"/>
    </location>
</feature>
<feature type="turn" evidence="7">
    <location>
        <begin position="292"/>
        <end position="294"/>
    </location>
</feature>
<feature type="strand" evidence="7">
    <location>
        <begin position="297"/>
        <end position="306"/>
    </location>
</feature>
<feature type="strand" evidence="7">
    <location>
        <begin position="309"/>
        <end position="311"/>
    </location>
</feature>
<feature type="strand" evidence="7">
    <location>
        <begin position="313"/>
        <end position="315"/>
    </location>
</feature>
<feature type="strand" evidence="7">
    <location>
        <begin position="319"/>
        <end position="321"/>
    </location>
</feature>
<feature type="strand" evidence="7">
    <location>
        <begin position="323"/>
        <end position="329"/>
    </location>
</feature>
<feature type="helix" evidence="7">
    <location>
        <begin position="330"/>
        <end position="332"/>
    </location>
</feature>
<feature type="strand" evidence="7">
    <location>
        <begin position="336"/>
        <end position="338"/>
    </location>
</feature>
<feature type="helix" evidence="7">
    <location>
        <begin position="346"/>
        <end position="355"/>
    </location>
</feature>
<proteinExistence type="evidence at protein level"/>
<protein>
    <recommendedName>
        <fullName>ATP-sensitive inward rectifier potassium channel 11</fullName>
    </recommendedName>
    <alternativeName>
        <fullName>Inward rectifier K(+) channel Kir6.2</fullName>
    </alternativeName>
    <alternativeName>
        <fullName>Potassium channel, inwardly rectifying subfamily J member 11</fullName>
    </alternativeName>
</protein>
<keyword id="KW-0002">3D-structure</keyword>
<keyword id="KW-0067">ATP-binding</keyword>
<keyword id="KW-1015">Disulfide bond</keyword>
<keyword id="KW-0407">Ion channel</keyword>
<keyword id="KW-0406">Ion transport</keyword>
<keyword id="KW-0472">Membrane</keyword>
<keyword id="KW-0479">Metal-binding</keyword>
<keyword id="KW-0547">Nucleotide-binding</keyword>
<keyword id="KW-0597">Phosphoprotein</keyword>
<keyword id="KW-0630">Potassium</keyword>
<keyword id="KW-0633">Potassium transport</keyword>
<keyword id="KW-1185">Reference proteome</keyword>
<keyword id="KW-0812">Transmembrane</keyword>
<keyword id="KW-1133">Transmembrane helix</keyword>
<keyword id="KW-0813">Transport</keyword>
<keyword id="KW-0851">Voltage-gated channel</keyword>
<comment type="function">
    <text evidence="3">Inward rectifier potassium channel that forms the pore of ATP-sensitive potassium channels (KATP), regulating potassium permeability as a function of cytoplasmic ATP and ADP concentrations in many different cells (By similarity). Inward rectifier potassium channels are characterized by a greater tendency to allow potassium to flow into the cell rather than out of it. Their voltage dependence is regulated by the concentration of extracellular potassium; as external potassium is raised, the voltage range of the channel opening shifts to more positive voltages. The inward rectification is mainly due to the blockage of outward current by internal magnesium. Can be blocked by extracellular barium (By similarity). In pancreatic cells, it forms KATP channels with ABCC8/SUR1 (By similarity). Can form cardiac and smooth muscle-type KATP channels with ABCC9 (By similarity).</text>
</comment>
<comment type="catalytic activity">
    <reaction evidence="4">
        <text>K(+)(in) = K(+)(out)</text>
        <dbReference type="Rhea" id="RHEA:29463"/>
        <dbReference type="ChEBI" id="CHEBI:29103"/>
    </reaction>
</comment>
<comment type="activity regulation">
    <text evidence="3">KATP channels are regulated by cytoplasmic ATP/ADP ratios; ATP inhibits the channel by closing the pore, while ADP activates the channel. Activated by phosphatidylinositol 4,5-biphosphate (PtdIns(4,5)P2).</text>
</comment>
<comment type="subunit">
    <text evidence="3">Homotetramer; the homotetramer binds four ATP molecules (one ATP per subunit). Forms an heterooctamer with ABCC8/SUR1; one KCNJ11 homotetramer interacts with four ABCC8/SUR1 molecules. Interacts with ABCC9/SUR2.</text>
</comment>
<comment type="interaction">
    <interactant intactId="EBI-8603527">
        <id>Q61743</id>
    </interactant>
    <interactant intactId="EBI-774322">
        <id>Q8C8R3</id>
        <label>Ank2</label>
    </interactant>
    <organismsDiffer>false</organismsDiffer>
    <experiments>2</experiments>
</comment>
<comment type="interaction">
    <interactant intactId="EBI-8603527">
        <id>Q61743</id>
    </interactant>
    <interactant intactId="EBI-1642835">
        <id>O94973</id>
        <label>AP2A2</label>
    </interactant>
    <organismsDiffer>true</organismsDiffer>
    <experiments>2</experiments>
</comment>
<comment type="interaction">
    <interactant intactId="EBI-8603527">
        <id>Q61743</id>
    </interactant>
    <interactant intactId="EBI-10953250">
        <id>G3I1T3</id>
        <label>I79_017352</label>
    </interactant>
    <organismsDiffer>true</organismsDiffer>
    <experiments>3</experiments>
</comment>
<comment type="subcellular location">
    <subcellularLocation>
        <location evidence="3">Membrane</location>
        <topology evidence="3">Multi-pass membrane protein</topology>
    </subcellularLocation>
</comment>
<comment type="domain">
    <text evidence="2">There are two PtdIns(4,5)P2 binding sites: A canonical site where the phosphate groups of one PtdIns(4,5)P2 molecule are coordinated at least by residues Lys-67, Trp-68 and Arg-176; a non-canonical site where the second PtdIns(4,5)P2 molecule is coordinated by both KCNJ11 and ABCC8/SUR1 residues.</text>
</comment>
<comment type="PTM">
    <text evidence="1">Phosphorylation by MAPK1 results in changes in channel gating that destabilize the closed states and reduce the ATP sensitivity.</text>
</comment>
<comment type="similarity">
    <text evidence="5">Belongs to the inward rectifier-type potassium channel (TC 1.A.2.1) family. KCNJ11 subfamily.</text>
</comment>
<accession>Q61743</accession>
<accession>Q9QX21</accession>
<gene>
    <name type="primary">Kcnj11</name>
</gene>
<evidence type="ECO:0000250" key="1"/>
<evidence type="ECO:0000250" key="2">
    <source>
        <dbReference type="UniProtKB" id="P70673"/>
    </source>
</evidence>
<evidence type="ECO:0000250" key="3">
    <source>
        <dbReference type="UniProtKB" id="Q14654"/>
    </source>
</evidence>
<evidence type="ECO:0000269" key="4">
    <source>
    </source>
</evidence>
<evidence type="ECO:0000305" key="5"/>
<evidence type="ECO:0007829" key="6">
    <source>
        <dbReference type="PDB" id="6JB1"/>
    </source>
</evidence>
<evidence type="ECO:0007829" key="7">
    <source>
        <dbReference type="PDB" id="7W4O"/>
    </source>
</evidence>
<evidence type="ECO:0007829" key="8">
    <source>
        <dbReference type="PDB" id="7W4P"/>
    </source>
</evidence>
<name>KCJ11_MOUSE</name>
<reference key="1">
    <citation type="journal article" date="1995" name="Science">
        <title>Reconstitution of IKATP: an inward rectifier subunit plus the sulfonylurea receptor.</title>
        <authorList>
            <person name="Inagaki N."/>
            <person name="Gonoi T."/>
            <person name="Clement J.P. IV"/>
            <person name="Namba N."/>
            <person name="Inazawa J."/>
            <person name="Gonzalez G."/>
            <person name="Aguilar-Bryan L."/>
            <person name="Seino S."/>
            <person name="Bryan J."/>
        </authorList>
    </citation>
    <scope>NUCLEOTIDE SEQUENCE [MRNA]</scope>
    <source>
        <strain>C57BL/6J</strain>
        <tissue>Pancreatic islet</tissue>
    </source>
</reference>
<reference key="2">
    <citation type="journal article" date="1995" name="FEBS Lett.">
        <title>Cloning and functional expression of the cDNA encoding a novel ATP-sensitive potassium channel subunit expressed in pancreatic beta-cells, brain, heart and skeletal muscle.</title>
        <authorList>
            <person name="Sakura H."/>
            <person name="Aemmaelae C."/>
            <person name="Smith P.A."/>
            <person name="Gribble F.M."/>
            <person name="Ashcroft F.M."/>
        </authorList>
    </citation>
    <scope>NUCLEOTIDE SEQUENCE</scope>
    <scope>TRANSPORTER ACTIVITY</scope>
    <source>
        <tissue>Pancreatic islet</tissue>
    </source>
</reference>
<reference key="3">
    <citation type="submission" date="1997-12" db="EMBL/GenBank/DDBJ databases">
        <title>Structural characterization of the mouse sulfonylurea receptor-1 and potassium inward rectifier 6.2 genes.</title>
        <authorList>
            <person name="Kooptiwut S."/>
            <person name="Shelton K.D."/>
            <person name="Magnuson M.A."/>
        </authorList>
    </citation>
    <scope>NUCLEOTIDE SEQUENCE [GENOMIC DNA]</scope>
    <source>
        <strain>129/Ola</strain>
    </source>
</reference>
<reference key="4">
    <citation type="journal article" date="2004" name="Genome Res.">
        <title>The status, quality, and expansion of the NIH full-length cDNA project: the Mammalian Gene Collection (MGC).</title>
        <authorList>
            <consortium name="The MGC Project Team"/>
        </authorList>
    </citation>
    <scope>NUCLEOTIDE SEQUENCE [LARGE SCALE MRNA]</scope>
    <source>
        <strain>C57BL/6J</strain>
        <tissue>Brain</tissue>
    </source>
</reference>
<dbReference type="EMBL" id="D50581">
    <property type="protein sequence ID" value="BAA09130.1"/>
    <property type="molecule type" value="mRNA"/>
</dbReference>
<dbReference type="EMBL" id="U73626">
    <property type="protein sequence ID" value="AAB17355.1"/>
    <property type="molecule type" value="mRNA"/>
</dbReference>
<dbReference type="EMBL" id="AF037313">
    <property type="protein sequence ID" value="AAD02096.1"/>
    <property type="molecule type" value="Genomic_DNA"/>
</dbReference>
<dbReference type="EMBL" id="BC052731">
    <property type="protein sequence ID" value="AAH52731.1"/>
    <property type="molecule type" value="mRNA"/>
</dbReference>
<dbReference type="EMBL" id="BC057006">
    <property type="protein sequence ID" value="AAH57006.1"/>
    <property type="molecule type" value="mRNA"/>
</dbReference>
<dbReference type="CCDS" id="CCDS21274.1"/>
<dbReference type="PIR" id="S68403">
    <property type="entry name" value="S68403"/>
</dbReference>
<dbReference type="RefSeq" id="NP_034732.1">
    <property type="nucleotide sequence ID" value="NM_010602.4"/>
</dbReference>
<dbReference type="PDB" id="5WUA">
    <property type="method" value="EM"/>
    <property type="resolution" value="5.60 A"/>
    <property type="chains" value="A/B/C/D=1-390"/>
</dbReference>
<dbReference type="PDB" id="5YKE">
    <property type="method" value="EM"/>
    <property type="resolution" value="4.11 A"/>
    <property type="chains" value="A/C/E/G=1-390"/>
</dbReference>
<dbReference type="PDB" id="5YKF">
    <property type="method" value="EM"/>
    <property type="resolution" value="4.33 A"/>
    <property type="chains" value="A/C/E/G=1-390"/>
</dbReference>
<dbReference type="PDB" id="5YKG">
    <property type="method" value="EM"/>
    <property type="resolution" value="4.57 A"/>
    <property type="chains" value="A/C/E/G=1-390"/>
</dbReference>
<dbReference type="PDB" id="5YW8">
    <property type="method" value="EM"/>
    <property type="resolution" value="4.40 A"/>
    <property type="chains" value="A/C/E/G=1-390"/>
</dbReference>
<dbReference type="PDB" id="5YW9">
    <property type="method" value="EM"/>
    <property type="resolution" value="5.00 A"/>
    <property type="chains" value="A/C/E/G=1-390"/>
</dbReference>
<dbReference type="PDB" id="5YWA">
    <property type="method" value="EM"/>
    <property type="resolution" value="6.10 A"/>
    <property type="chains" value="A/C/E/G=1-390"/>
</dbReference>
<dbReference type="PDB" id="5YWB">
    <property type="method" value="EM"/>
    <property type="resolution" value="5.20 A"/>
    <property type="chains" value="A/C/E/G=1-390"/>
</dbReference>
<dbReference type="PDB" id="5YWC">
    <property type="method" value="EM"/>
    <property type="resolution" value="4.30 A"/>
    <property type="chains" value="A/C/E/G=1-390"/>
</dbReference>
<dbReference type="PDB" id="6JB1">
    <property type="method" value="EM"/>
    <property type="resolution" value="3.30 A"/>
    <property type="chains" value="A/C/E/G=1-390"/>
</dbReference>
<dbReference type="PDB" id="7W4O">
    <property type="method" value="EM"/>
    <property type="resolution" value="2.96 A"/>
    <property type="chains" value="A/C/E/G=1-390"/>
</dbReference>
<dbReference type="PDB" id="7W4P">
    <property type="method" value="EM"/>
    <property type="resolution" value="3.19 A"/>
    <property type="chains" value="A/C/E/G=1-390"/>
</dbReference>
<dbReference type="PDBsum" id="5WUA"/>
<dbReference type="PDBsum" id="5YKE"/>
<dbReference type="PDBsum" id="5YKF"/>
<dbReference type="PDBsum" id="5YKG"/>
<dbReference type="PDBsum" id="5YW8"/>
<dbReference type="PDBsum" id="5YW9"/>
<dbReference type="PDBsum" id="5YWA"/>
<dbReference type="PDBsum" id="5YWB"/>
<dbReference type="PDBsum" id="5YWC"/>
<dbReference type="PDBsum" id="6JB1"/>
<dbReference type="PDBsum" id="7W4O"/>
<dbReference type="PDBsum" id="7W4P"/>
<dbReference type="EMDB" id="EMD-32310"/>
<dbReference type="EMDB" id="EMD-32311"/>
<dbReference type="EMDB" id="EMD-3265"/>
<dbReference type="EMDB" id="EMD-6689"/>
<dbReference type="EMDB" id="EMD-6831"/>
<dbReference type="EMDB" id="EMD-6832"/>
<dbReference type="EMDB" id="EMD-6833"/>
<dbReference type="EMDB" id="EMD-6848"/>
<dbReference type="EMDB" id="EMD-6849"/>
<dbReference type="EMDB" id="EMD-6850"/>
<dbReference type="EMDB" id="EMD-6851"/>
<dbReference type="EMDB" id="EMD-6852"/>
<dbReference type="EMDB" id="EMD-9787"/>
<dbReference type="SMR" id="Q61743"/>
<dbReference type="BioGRID" id="200896">
    <property type="interactions" value="1"/>
</dbReference>
<dbReference type="ComplexPortal" id="CPX-194">
    <property type="entry name" value="Inward rectifying potassium channel complex, Kir6.2-SUR1"/>
</dbReference>
<dbReference type="ComplexPortal" id="CPX-196">
    <property type="entry name" value="Inward rectifying potassium channel complex, Kir6.2-SUR2A"/>
</dbReference>
<dbReference type="ComplexPortal" id="CPX-198">
    <property type="entry name" value="Inward rectifying potassium channel complex, Kir6.2-SUR2B"/>
</dbReference>
<dbReference type="CORUM" id="Q61743"/>
<dbReference type="DIP" id="DIP-42790N"/>
<dbReference type="FunCoup" id="Q61743">
    <property type="interactions" value="69"/>
</dbReference>
<dbReference type="IntAct" id="Q61743">
    <property type="interactions" value="5"/>
</dbReference>
<dbReference type="MINT" id="Q61743"/>
<dbReference type="STRING" id="10090.ENSMUSP00000147439"/>
<dbReference type="DrugCentral" id="Q61743"/>
<dbReference type="GuidetoPHARMACOLOGY" id="442"/>
<dbReference type="iPTMnet" id="Q61743"/>
<dbReference type="PhosphoSitePlus" id="Q61743"/>
<dbReference type="PaxDb" id="10090-ENSMUSP00000136002"/>
<dbReference type="ProteomicsDB" id="263589"/>
<dbReference type="ABCD" id="Q61743">
    <property type="antibodies" value="1 sequenced antibody"/>
</dbReference>
<dbReference type="Antibodypedia" id="24845">
    <property type="antibodies" value="457 antibodies from 37 providers"/>
</dbReference>
<dbReference type="DNASU" id="16514"/>
<dbReference type="Ensembl" id="ENSMUST00000211674.2">
    <property type="protein sequence ID" value="ENSMUSP00000147439.2"/>
    <property type="gene ID" value="ENSMUSG00000096146.3"/>
</dbReference>
<dbReference type="GeneID" id="16514"/>
<dbReference type="KEGG" id="mmu:16514"/>
<dbReference type="UCSC" id="uc009gyc.2">
    <property type="organism name" value="mouse"/>
</dbReference>
<dbReference type="AGR" id="MGI:107501"/>
<dbReference type="CTD" id="3767"/>
<dbReference type="MGI" id="MGI:107501">
    <property type="gene designation" value="Kcnj11"/>
</dbReference>
<dbReference type="VEuPathDB" id="HostDB:ENSMUSG00000096146"/>
<dbReference type="eggNOG" id="KOG3827">
    <property type="taxonomic scope" value="Eukaryota"/>
</dbReference>
<dbReference type="GeneTree" id="ENSGT01130000278330"/>
<dbReference type="HOGENOM" id="CLU_022738_4_0_1"/>
<dbReference type="InParanoid" id="Q61743"/>
<dbReference type="OMA" id="FGMVWWL"/>
<dbReference type="OrthoDB" id="273257at2759"/>
<dbReference type="PhylomeDB" id="Q61743"/>
<dbReference type="TreeFam" id="TF313676"/>
<dbReference type="Reactome" id="R-MMU-1296025">
    <property type="pathway name" value="ATP sensitive Potassium channels"/>
</dbReference>
<dbReference type="Reactome" id="R-MMU-382556">
    <property type="pathway name" value="ABC-family proteins mediated transport"/>
</dbReference>
<dbReference type="Reactome" id="R-MMU-422356">
    <property type="pathway name" value="Regulation of insulin secretion"/>
</dbReference>
<dbReference type="Reactome" id="R-MMU-5578775">
    <property type="pathway name" value="Ion homeostasis"/>
</dbReference>
<dbReference type="BioGRID-ORCS" id="16514">
    <property type="hits" value="2 hits in 46 CRISPR screens"/>
</dbReference>
<dbReference type="PRO" id="PR:Q61743"/>
<dbReference type="Proteomes" id="UP000000589">
    <property type="component" value="Chromosome 7"/>
</dbReference>
<dbReference type="RNAct" id="Q61743">
    <property type="molecule type" value="protein"/>
</dbReference>
<dbReference type="Bgee" id="ENSMUSG00000096146">
    <property type="expression patterns" value="Expressed in gastrula and 180 other cell types or tissues"/>
</dbReference>
<dbReference type="ExpressionAtlas" id="Q61743">
    <property type="expression patterns" value="baseline and differential"/>
</dbReference>
<dbReference type="GO" id="GO:0001669">
    <property type="term" value="C:acrosomal vesicle"/>
    <property type="evidence" value="ECO:0007669"/>
    <property type="project" value="Ensembl"/>
</dbReference>
<dbReference type="GO" id="GO:0030673">
    <property type="term" value="C:axolemma"/>
    <property type="evidence" value="ECO:0007669"/>
    <property type="project" value="Ensembl"/>
</dbReference>
<dbReference type="GO" id="GO:0070852">
    <property type="term" value="C:cell body fiber"/>
    <property type="evidence" value="ECO:0007669"/>
    <property type="project" value="Ensembl"/>
</dbReference>
<dbReference type="GO" id="GO:0005737">
    <property type="term" value="C:cytoplasm"/>
    <property type="evidence" value="ECO:0000314"/>
    <property type="project" value="MGI"/>
</dbReference>
<dbReference type="GO" id="GO:0005768">
    <property type="term" value="C:endosome"/>
    <property type="evidence" value="ECO:0007669"/>
    <property type="project" value="Ensembl"/>
</dbReference>
<dbReference type="GO" id="GO:0098978">
    <property type="term" value="C:glutamatergic synapse"/>
    <property type="evidence" value="ECO:0007669"/>
    <property type="project" value="Ensembl"/>
</dbReference>
<dbReference type="GO" id="GO:0014704">
    <property type="term" value="C:intercalated disc"/>
    <property type="evidence" value="ECO:0007669"/>
    <property type="project" value="Ensembl"/>
</dbReference>
<dbReference type="GO" id="GO:0008282">
    <property type="term" value="C:inward rectifying potassium channel"/>
    <property type="evidence" value="ECO:0000314"/>
    <property type="project" value="BHF-UCL"/>
</dbReference>
<dbReference type="GO" id="GO:0043025">
    <property type="term" value="C:neuronal cell body"/>
    <property type="evidence" value="ECO:0007669"/>
    <property type="project" value="Ensembl"/>
</dbReference>
<dbReference type="GO" id="GO:0005635">
    <property type="term" value="C:nuclear envelope"/>
    <property type="evidence" value="ECO:0007669"/>
    <property type="project" value="Ensembl"/>
</dbReference>
<dbReference type="GO" id="GO:0005886">
    <property type="term" value="C:plasma membrane"/>
    <property type="evidence" value="ECO:0000314"/>
    <property type="project" value="MGI"/>
</dbReference>
<dbReference type="GO" id="GO:0042734">
    <property type="term" value="C:presynaptic membrane"/>
    <property type="evidence" value="ECO:0007669"/>
    <property type="project" value="Ensembl"/>
</dbReference>
<dbReference type="GO" id="GO:0030315">
    <property type="term" value="C:T-tubule"/>
    <property type="evidence" value="ECO:0000314"/>
    <property type="project" value="BHF-UCL"/>
</dbReference>
<dbReference type="GO" id="GO:0030506">
    <property type="term" value="F:ankyrin binding"/>
    <property type="evidence" value="ECO:0000353"/>
    <property type="project" value="BHF-UCL"/>
</dbReference>
<dbReference type="GO" id="GO:0005524">
    <property type="term" value="F:ATP binding"/>
    <property type="evidence" value="ECO:0000314"/>
    <property type="project" value="BHF-UCL"/>
</dbReference>
<dbReference type="GO" id="GO:0015272">
    <property type="term" value="F:ATP-activated inward rectifier potassium channel activity"/>
    <property type="evidence" value="ECO:0000314"/>
    <property type="project" value="BHF-UCL"/>
</dbReference>
<dbReference type="GO" id="GO:0019829">
    <property type="term" value="F:ATPase-coupled monoatomic cation transmembrane transporter activity"/>
    <property type="evidence" value="ECO:0007669"/>
    <property type="project" value="Ensembl"/>
</dbReference>
<dbReference type="GO" id="GO:0031072">
    <property type="term" value="F:heat shock protein binding"/>
    <property type="evidence" value="ECO:0007669"/>
    <property type="project" value="Ensembl"/>
</dbReference>
<dbReference type="GO" id="GO:0005242">
    <property type="term" value="F:inward rectifier potassium channel activity"/>
    <property type="evidence" value="ECO:0000314"/>
    <property type="project" value="MGI"/>
</dbReference>
<dbReference type="GO" id="GO:0030955">
    <property type="term" value="F:potassium ion binding"/>
    <property type="evidence" value="ECO:0000305"/>
    <property type="project" value="BHF-UCL"/>
</dbReference>
<dbReference type="GO" id="GO:0044325">
    <property type="term" value="F:transmembrane transporter binding"/>
    <property type="evidence" value="ECO:0007669"/>
    <property type="project" value="Ensembl"/>
</dbReference>
<dbReference type="GO" id="GO:0099508">
    <property type="term" value="F:voltage-gated monoatomic ion channel activity involved in regulation of presynaptic membrane potential"/>
    <property type="evidence" value="ECO:0007669"/>
    <property type="project" value="Ensembl"/>
</dbReference>
<dbReference type="GO" id="GO:0001508">
    <property type="term" value="P:action potential"/>
    <property type="evidence" value="ECO:0000315"/>
    <property type="project" value="MGI"/>
</dbReference>
<dbReference type="GO" id="GO:0006915">
    <property type="term" value="P:apoptotic process"/>
    <property type="evidence" value="ECO:0000315"/>
    <property type="project" value="MGI"/>
</dbReference>
<dbReference type="GO" id="GO:0061762">
    <property type="term" value="P:CAMKK-AMPK signaling cascade"/>
    <property type="evidence" value="ECO:0000315"/>
    <property type="project" value="MGI"/>
</dbReference>
<dbReference type="GO" id="GO:0071333">
    <property type="term" value="P:cellular response to glucose stimulus"/>
    <property type="evidence" value="ECO:0007669"/>
    <property type="project" value="Ensembl"/>
</dbReference>
<dbReference type="GO" id="GO:0071316">
    <property type="term" value="P:cellular response to nicotine"/>
    <property type="evidence" value="ECO:0007669"/>
    <property type="project" value="Ensembl"/>
</dbReference>
<dbReference type="GO" id="GO:0031669">
    <property type="term" value="P:cellular response to nutrient levels"/>
    <property type="evidence" value="ECO:0000315"/>
    <property type="project" value="MGI"/>
</dbReference>
<dbReference type="GO" id="GO:0071356">
    <property type="term" value="P:cellular response to tumor necrosis factor"/>
    <property type="evidence" value="ECO:0007669"/>
    <property type="project" value="Ensembl"/>
</dbReference>
<dbReference type="GO" id="GO:0008340">
    <property type="term" value="P:determination of adult lifespan"/>
    <property type="evidence" value="ECO:0000316"/>
    <property type="project" value="MGI"/>
</dbReference>
<dbReference type="GO" id="GO:0006006">
    <property type="term" value="P:glucose metabolic process"/>
    <property type="evidence" value="ECO:0007669"/>
    <property type="project" value="Ensembl"/>
</dbReference>
<dbReference type="GO" id="GO:0046676">
    <property type="term" value="P:negative regulation of insulin secretion"/>
    <property type="evidence" value="ECO:0000315"/>
    <property type="project" value="MGI"/>
</dbReference>
<dbReference type="GO" id="GO:0050877">
    <property type="term" value="P:nervous system process"/>
    <property type="evidence" value="ECO:0007669"/>
    <property type="project" value="Ensembl"/>
</dbReference>
<dbReference type="GO" id="GO:1903078">
    <property type="term" value="P:positive regulation of protein localization to plasma membrane"/>
    <property type="evidence" value="ECO:0007669"/>
    <property type="project" value="Ensembl"/>
</dbReference>
<dbReference type="GO" id="GO:1990573">
    <property type="term" value="P:potassium ion import across plasma membrane"/>
    <property type="evidence" value="ECO:0000314"/>
    <property type="project" value="BHF-UCL"/>
</dbReference>
<dbReference type="GO" id="GO:0033198">
    <property type="term" value="P:response to ATP"/>
    <property type="evidence" value="ECO:0007669"/>
    <property type="project" value="Ensembl"/>
</dbReference>
<dbReference type="GO" id="GO:0032355">
    <property type="term" value="P:response to estradiol"/>
    <property type="evidence" value="ECO:0007669"/>
    <property type="project" value="Ensembl"/>
</dbReference>
<dbReference type="GO" id="GO:0001666">
    <property type="term" value="P:response to hypoxia"/>
    <property type="evidence" value="ECO:0000315"/>
    <property type="project" value="MGI"/>
</dbReference>
<dbReference type="GO" id="GO:0002931">
    <property type="term" value="P:response to ischemia"/>
    <property type="evidence" value="ECO:0000315"/>
    <property type="project" value="MGI"/>
</dbReference>
<dbReference type="GO" id="GO:1904638">
    <property type="term" value="P:response to resveratrol"/>
    <property type="evidence" value="ECO:0000315"/>
    <property type="project" value="MGI"/>
</dbReference>
<dbReference type="GO" id="GO:0006950">
    <property type="term" value="P:response to stress"/>
    <property type="evidence" value="ECO:0000316"/>
    <property type="project" value="MGI"/>
</dbReference>
<dbReference type="GO" id="GO:0033574">
    <property type="term" value="P:response to testosterone"/>
    <property type="evidence" value="ECO:0007669"/>
    <property type="project" value="Ensembl"/>
</dbReference>
<dbReference type="GO" id="GO:0009410">
    <property type="term" value="P:response to xenobiotic stimulus"/>
    <property type="evidence" value="ECO:0007669"/>
    <property type="project" value="Ensembl"/>
</dbReference>
<dbReference type="GO" id="GO:0003229">
    <property type="term" value="P:ventricular cardiac muscle tissue development"/>
    <property type="evidence" value="ECO:0000316"/>
    <property type="project" value="MGI"/>
</dbReference>
<dbReference type="FunFam" id="1.10.287.70:FF:000050">
    <property type="entry name" value="ATP-sensitive inward rectifier potassium channel 11"/>
    <property type="match status" value="1"/>
</dbReference>
<dbReference type="FunFam" id="2.60.40.1400:FF:000001">
    <property type="entry name" value="G protein-activated inward rectifier potassium channel 2"/>
    <property type="match status" value="1"/>
</dbReference>
<dbReference type="Gene3D" id="1.10.287.70">
    <property type="match status" value="1"/>
</dbReference>
<dbReference type="Gene3D" id="2.60.40.1400">
    <property type="entry name" value="G protein-activated inward rectifier potassium channel 1"/>
    <property type="match status" value="1"/>
</dbReference>
<dbReference type="InterPro" id="IPR014756">
    <property type="entry name" value="Ig_E-set"/>
</dbReference>
<dbReference type="InterPro" id="IPR041647">
    <property type="entry name" value="IRK_C"/>
</dbReference>
<dbReference type="InterPro" id="IPR016449">
    <property type="entry name" value="K_chnl_inward-rec_Kir"/>
</dbReference>
<dbReference type="InterPro" id="IPR003279">
    <property type="entry name" value="K_chnl_inward-rec_Kir6.2"/>
</dbReference>
<dbReference type="InterPro" id="IPR013518">
    <property type="entry name" value="K_chnl_inward-rec_Kir_cyto"/>
</dbReference>
<dbReference type="InterPro" id="IPR040445">
    <property type="entry name" value="Kir_TM"/>
</dbReference>
<dbReference type="PANTHER" id="PTHR11767:SF44">
    <property type="entry name" value="ATP-SENSITIVE INWARD RECTIFIER POTASSIUM CHANNEL 11"/>
    <property type="match status" value="1"/>
</dbReference>
<dbReference type="PANTHER" id="PTHR11767">
    <property type="entry name" value="INWARD RECTIFIER POTASSIUM CHANNEL"/>
    <property type="match status" value="1"/>
</dbReference>
<dbReference type="Pfam" id="PF01007">
    <property type="entry name" value="IRK"/>
    <property type="match status" value="1"/>
</dbReference>
<dbReference type="Pfam" id="PF17655">
    <property type="entry name" value="IRK_C"/>
    <property type="match status" value="1"/>
</dbReference>
<dbReference type="PIRSF" id="PIRSF005465">
    <property type="entry name" value="GIRK_kir"/>
    <property type="match status" value="1"/>
</dbReference>
<dbReference type="PRINTS" id="PR01332">
    <property type="entry name" value="KIR62CHANNEL"/>
</dbReference>
<dbReference type="PRINTS" id="PR01320">
    <property type="entry name" value="KIRCHANNEL"/>
</dbReference>
<dbReference type="SUPFAM" id="SSF81296">
    <property type="entry name" value="E set domains"/>
    <property type="match status" value="1"/>
</dbReference>
<dbReference type="SUPFAM" id="SSF81324">
    <property type="entry name" value="Voltage-gated potassium channels"/>
    <property type="match status" value="1"/>
</dbReference>
<organism>
    <name type="scientific">Mus musculus</name>
    <name type="common">Mouse</name>
    <dbReference type="NCBI Taxonomy" id="10090"/>
    <lineage>
        <taxon>Eukaryota</taxon>
        <taxon>Metazoa</taxon>
        <taxon>Chordata</taxon>
        <taxon>Craniata</taxon>
        <taxon>Vertebrata</taxon>
        <taxon>Euteleostomi</taxon>
        <taxon>Mammalia</taxon>
        <taxon>Eutheria</taxon>
        <taxon>Euarchontoglires</taxon>
        <taxon>Glires</taxon>
        <taxon>Rodentia</taxon>
        <taxon>Myomorpha</taxon>
        <taxon>Muroidea</taxon>
        <taxon>Muridae</taxon>
        <taxon>Murinae</taxon>
        <taxon>Mus</taxon>
        <taxon>Mus</taxon>
    </lineage>
</organism>